<protein>
    <recommendedName>
        <fullName>Potassium voltage-gated channel subfamily A member 5</fullName>
    </recommendedName>
    <alternativeName>
        <fullName>RCK7</fullName>
    </alternativeName>
    <alternativeName>
        <fullName>RK4</fullName>
    </alternativeName>
    <alternativeName>
        <fullName>Voltage-gated potassium channel subunit Kv1.5</fullName>
    </alternativeName>
</protein>
<gene>
    <name type="primary">Kcna5</name>
</gene>
<sequence length="602" mass="66553">MEISLVPLENGSAMTLRGGGEAGASCVQTPRGECGCPPTSGLNNQSKETLLRGRTTLEDANQGGRPLPPMAQELPQPRRLSAEDEEGEGDPGLGTVEEDQAPQDAGSLHHQRVLINISGLRFETQLGTLAQFPNTLLGDPAKRLHYFDPLRNEYFFDRNRPSFDGILYYYQSGGRLRRPVNVSLDVFADEIRFYQLGDEAMERFREDEGFIKEEEKPLPRNEFQRQVWLIFEYPESSGSARAIAIVSVLVILISIITFCLETLPEFRDERELLRHPPVPPQPPAPAPGINGSVSGALSSGPTVAPLLPRTLADPFFIVETTCVIWFTFELLVRFFACPSKAEFSRNIMNIIDVVAIFPYFITLGTELAEQQPGGGGQNGQQAMSLAILRVIRLVRVFRIFKLSRHSKGLQILGKTLQASMRELGLLIFFLFIGVILFSSAVYFAEADNHGSHFSSIPDAFWWAVVTMTTVGYGDMRPITVGGKIVGSLCAIAGVLTIALPVPVIVSNFNYFYHRETDHEEQAALKEEQGNQRRESGLDTGGQRKVSCSKASFCKTGGSLESSDSIRRGSCPLEKCHLKAKSNVDLRRSLYALCLDTSRETDL</sequence>
<organism>
    <name type="scientific">Rattus norvegicus</name>
    <name type="common">Rat</name>
    <dbReference type="NCBI Taxonomy" id="10116"/>
    <lineage>
        <taxon>Eukaryota</taxon>
        <taxon>Metazoa</taxon>
        <taxon>Chordata</taxon>
        <taxon>Craniata</taxon>
        <taxon>Vertebrata</taxon>
        <taxon>Euteleostomi</taxon>
        <taxon>Mammalia</taxon>
        <taxon>Eutheria</taxon>
        <taxon>Euarchontoglires</taxon>
        <taxon>Glires</taxon>
        <taxon>Rodentia</taxon>
        <taxon>Myomorpha</taxon>
        <taxon>Muroidea</taxon>
        <taxon>Muridae</taxon>
        <taxon>Murinae</taxon>
        <taxon>Rattus</taxon>
    </lineage>
</organism>
<accession>P19024</accession>
<accession>Q6LEB7</accession>
<feature type="chain" id="PRO_0000053989" description="Potassium voltage-gated channel subfamily A member 5">
    <location>
        <begin position="1"/>
        <end position="602"/>
    </location>
</feature>
<feature type="topological domain" description="Cytoplasmic" evidence="2">
    <location>
        <begin position="1"/>
        <end position="238"/>
    </location>
</feature>
<feature type="transmembrane region" description="Helical; Name=Segment S1" evidence="2">
    <location>
        <begin position="239"/>
        <end position="260"/>
    </location>
</feature>
<feature type="topological domain" description="Extracellular" evidence="2">
    <location>
        <begin position="261"/>
        <end position="314"/>
    </location>
</feature>
<feature type="transmembrane region" description="Helical; Name=Segment S2" evidence="2">
    <location>
        <begin position="315"/>
        <end position="336"/>
    </location>
</feature>
<feature type="topological domain" description="Cytoplasmic" evidence="2">
    <location>
        <begin position="337"/>
        <end position="347"/>
    </location>
</feature>
<feature type="transmembrane region" description="Helical; Name=Segment S3" evidence="2">
    <location>
        <begin position="348"/>
        <end position="368"/>
    </location>
</feature>
<feature type="topological domain" description="Extracellular" evidence="2">
    <location>
        <begin position="369"/>
        <end position="384"/>
    </location>
</feature>
<feature type="transmembrane region" description="Helical; Voltage-sensor; Name=Segment S4" evidence="2">
    <location>
        <begin position="385"/>
        <end position="405"/>
    </location>
</feature>
<feature type="topological domain" description="Cytoplasmic" evidence="2">
    <location>
        <begin position="406"/>
        <end position="420"/>
    </location>
</feature>
<feature type="transmembrane region" description="Helical; Name=Segment S5" evidence="2">
    <location>
        <begin position="421"/>
        <end position="442"/>
    </location>
</feature>
<feature type="topological domain" description="Extracellular" evidence="2">
    <location>
        <begin position="443"/>
        <end position="456"/>
    </location>
</feature>
<feature type="intramembrane region" description="Helical; Name=Pore helix" evidence="2">
    <location>
        <begin position="457"/>
        <end position="468"/>
    </location>
</feature>
<feature type="intramembrane region" evidence="2">
    <location>
        <begin position="469"/>
        <end position="476"/>
    </location>
</feature>
<feature type="topological domain" description="Extracellular" evidence="2">
    <location>
        <begin position="477"/>
        <end position="483"/>
    </location>
</feature>
<feature type="transmembrane region" description="Helical; Name=Segment S6" evidence="2">
    <location>
        <begin position="484"/>
        <end position="512"/>
    </location>
</feature>
<feature type="topological domain" description="Cytoplasmic" evidence="2">
    <location>
        <begin position="513"/>
        <end position="602"/>
    </location>
</feature>
<feature type="region of interest" description="Tetramerization domain" evidence="1">
    <location>
        <begin position="1"/>
        <end position="202"/>
    </location>
</feature>
<feature type="region of interest" description="Disordered" evidence="5">
    <location>
        <begin position="58"/>
        <end position="107"/>
    </location>
</feature>
<feature type="region of interest" description="S4-S5 linker" evidence="2">
    <location>
        <begin position="407"/>
        <end position="420"/>
    </location>
</feature>
<feature type="region of interest" description="Disordered" evidence="5">
    <location>
        <begin position="523"/>
        <end position="543"/>
    </location>
</feature>
<feature type="short sequence motif" description="Selectivity filter" evidence="2">
    <location>
        <begin position="469"/>
        <end position="474"/>
    </location>
</feature>
<feature type="short sequence motif" description="PDZ-binding">
    <location>
        <begin position="600"/>
        <end position="602"/>
    </location>
</feature>
<feature type="compositionally biased region" description="Basic and acidic residues" evidence="5">
    <location>
        <begin position="523"/>
        <end position="536"/>
    </location>
</feature>
<feature type="modified residue" description="Phosphoserine; by CK2 and PKA" evidence="4">
    <location>
        <position position="81"/>
    </location>
</feature>
<feature type="modified residue" description="Phosphoserine; by PKA" evidence="4">
    <location>
        <position position="535"/>
    </location>
</feature>
<feature type="modified residue" description="Phosphoserine; by PKA" evidence="4">
    <location>
        <position position="546"/>
    </location>
</feature>
<feature type="modified residue" description="Phosphoserine; by PKA" evidence="4">
    <location>
        <position position="569"/>
    </location>
</feature>
<feature type="lipid moiety-binding region" description="S-palmitoyl cysteine" evidence="4">
    <location>
        <position position="337"/>
    </location>
</feature>
<feature type="cross-link" description="Glycyl lysine isopeptide (Lys-Gly) (interchain with G-Cter in SUMO)" evidence="1">
    <location>
        <position position="212"/>
    </location>
</feature>
<feature type="cross-link" description="Glycyl lysine isopeptide (Lys-Gly) (interchain with G-Cter in SUMO)" evidence="1">
    <location>
        <position position="525"/>
    </location>
</feature>
<feature type="mutagenesis site" description="Loss of interaction with DLG1." evidence="6">
    <original>TDL</original>
    <variation>AAA</variation>
    <location>
        <begin position="600"/>
        <end position="602"/>
    </location>
</feature>
<feature type="sequence conflict" description="In Ref. 2; no nucleotide entry." evidence="11" ref="2">
    <original>C</original>
    <variation>S</variation>
    <location>
        <position position="553"/>
    </location>
</feature>
<dbReference type="EMBL" id="M27158">
    <property type="protein sequence ID" value="AAA41498.1"/>
    <property type="molecule type" value="Genomic_DNA"/>
</dbReference>
<dbReference type="EMBL" id="L23434">
    <property type="protein sequence ID" value="AAA42337.1"/>
    <property type="molecule type" value="Genomic_DNA"/>
</dbReference>
<dbReference type="PIR" id="JH0166">
    <property type="entry name" value="JH0166"/>
</dbReference>
<dbReference type="RefSeq" id="NP_037104.1">
    <property type="nucleotide sequence ID" value="NM_012972.2"/>
</dbReference>
<dbReference type="SMR" id="P19024"/>
<dbReference type="BioGRID" id="247503">
    <property type="interactions" value="6"/>
</dbReference>
<dbReference type="CORUM" id="P19024"/>
<dbReference type="FunCoup" id="P19024">
    <property type="interactions" value="26"/>
</dbReference>
<dbReference type="IntAct" id="P19024">
    <property type="interactions" value="4"/>
</dbReference>
<dbReference type="MINT" id="P19024"/>
<dbReference type="STRING" id="10116.ENSRNOP00000026691"/>
<dbReference type="ChEMBL" id="CHEMBL4295724"/>
<dbReference type="GlyGen" id="P19024">
    <property type="glycosylation" value="1 site"/>
</dbReference>
<dbReference type="PhosphoSitePlus" id="P19024"/>
<dbReference type="PaxDb" id="10116-ENSRNOP00000026691"/>
<dbReference type="ABCD" id="P19024">
    <property type="antibodies" value="1 sequenced antibody"/>
</dbReference>
<dbReference type="Ensembl" id="ENSRNOT00000026691.3">
    <property type="protein sequence ID" value="ENSRNOP00000026691.1"/>
    <property type="gene ID" value="ENSRNOG00000019719.3"/>
</dbReference>
<dbReference type="GeneID" id="25470"/>
<dbReference type="KEGG" id="rno:25470"/>
<dbReference type="UCSC" id="RGD:2953">
    <property type="organism name" value="rat"/>
</dbReference>
<dbReference type="AGR" id="RGD:2953"/>
<dbReference type="CTD" id="3741"/>
<dbReference type="RGD" id="2953">
    <property type="gene designation" value="Kcna5"/>
</dbReference>
<dbReference type="eggNOG" id="KOG1545">
    <property type="taxonomic scope" value="Eukaryota"/>
</dbReference>
<dbReference type="GeneTree" id="ENSGT00940000161860"/>
<dbReference type="HOGENOM" id="CLU_011722_4_0_1"/>
<dbReference type="InParanoid" id="P19024"/>
<dbReference type="OMA" id="PWKINDM"/>
<dbReference type="OrthoDB" id="415460at2759"/>
<dbReference type="PhylomeDB" id="P19024"/>
<dbReference type="TreeFam" id="TF313103"/>
<dbReference type="Reactome" id="R-RNO-1296072">
    <property type="pathway name" value="Voltage gated Potassium channels"/>
</dbReference>
<dbReference type="Reactome" id="R-RNO-5576890">
    <property type="pathway name" value="Phase 3 - rapid repolarisation"/>
</dbReference>
<dbReference type="PRO" id="PR:P19024"/>
<dbReference type="Proteomes" id="UP000002494">
    <property type="component" value="Chromosome 4"/>
</dbReference>
<dbReference type="Bgee" id="ENSRNOG00000019719">
    <property type="expression patterns" value="Expressed in skeletal muscle tissue and 10 other cell types or tissues"/>
</dbReference>
<dbReference type="GO" id="GO:0009986">
    <property type="term" value="C:cell surface"/>
    <property type="evidence" value="ECO:0000266"/>
    <property type="project" value="RGD"/>
</dbReference>
<dbReference type="GO" id="GO:0014704">
    <property type="term" value="C:intercalated disc"/>
    <property type="evidence" value="ECO:0000314"/>
    <property type="project" value="RGD"/>
</dbReference>
<dbReference type="GO" id="GO:0046691">
    <property type="term" value="C:intracellular canaliculus"/>
    <property type="evidence" value="ECO:0000314"/>
    <property type="project" value="RGD"/>
</dbReference>
<dbReference type="GO" id="GO:0016020">
    <property type="term" value="C:membrane"/>
    <property type="evidence" value="ECO:0000266"/>
    <property type="project" value="RGD"/>
</dbReference>
<dbReference type="GO" id="GO:0045121">
    <property type="term" value="C:membrane raft"/>
    <property type="evidence" value="ECO:0000266"/>
    <property type="project" value="RGD"/>
</dbReference>
<dbReference type="GO" id="GO:0048471">
    <property type="term" value="C:perinuclear region of cytoplasm"/>
    <property type="evidence" value="ECO:0000314"/>
    <property type="project" value="RGD"/>
</dbReference>
<dbReference type="GO" id="GO:0005886">
    <property type="term" value="C:plasma membrane"/>
    <property type="evidence" value="ECO:0000315"/>
    <property type="project" value="UniProtKB"/>
</dbReference>
<dbReference type="GO" id="GO:0034705">
    <property type="term" value="C:potassium channel complex"/>
    <property type="evidence" value="ECO:0000314"/>
    <property type="project" value="UniProtKB"/>
</dbReference>
<dbReference type="GO" id="GO:0008076">
    <property type="term" value="C:voltage-gated potassium channel complex"/>
    <property type="evidence" value="ECO:0000314"/>
    <property type="project" value="UniProtKB"/>
</dbReference>
<dbReference type="GO" id="GO:0030018">
    <property type="term" value="C:Z disc"/>
    <property type="evidence" value="ECO:0000314"/>
    <property type="project" value="RGD"/>
</dbReference>
<dbReference type="GO" id="GO:0051393">
    <property type="term" value="F:alpha-actinin binding"/>
    <property type="evidence" value="ECO:0000266"/>
    <property type="project" value="RGD"/>
</dbReference>
<dbReference type="GO" id="GO:0005251">
    <property type="term" value="F:delayed rectifier potassium channel activity"/>
    <property type="evidence" value="ECO:0000314"/>
    <property type="project" value="UniProtKB"/>
</dbReference>
<dbReference type="GO" id="GO:0015271">
    <property type="term" value="F:outward rectifier potassium channel activity"/>
    <property type="evidence" value="ECO:0000315"/>
    <property type="project" value="RGD"/>
</dbReference>
<dbReference type="GO" id="GO:0019901">
    <property type="term" value="F:protein kinase binding"/>
    <property type="evidence" value="ECO:0000266"/>
    <property type="project" value="RGD"/>
</dbReference>
<dbReference type="GO" id="GO:0097110">
    <property type="term" value="F:scaffold protein binding"/>
    <property type="evidence" value="ECO:0000266"/>
    <property type="project" value="RGD"/>
</dbReference>
<dbReference type="GO" id="GO:0005102">
    <property type="term" value="F:signaling receptor binding"/>
    <property type="evidence" value="ECO:0000353"/>
    <property type="project" value="RGD"/>
</dbReference>
<dbReference type="GO" id="GO:0005249">
    <property type="term" value="F:voltage-gated potassium channel activity"/>
    <property type="evidence" value="ECO:0000314"/>
    <property type="project" value="UniProtKB"/>
</dbReference>
<dbReference type="GO" id="GO:0086089">
    <property type="term" value="F:voltage-gated potassium channel activity involved in atrial cardiac muscle cell action potential repolarization"/>
    <property type="evidence" value="ECO:0000266"/>
    <property type="project" value="RGD"/>
</dbReference>
<dbReference type="GO" id="GO:0086087">
    <property type="term" value="F:voltage-gated potassium channel activity involved in bundle of His cell action potential repolarization"/>
    <property type="evidence" value="ECO:0000266"/>
    <property type="project" value="RGD"/>
</dbReference>
<dbReference type="GO" id="GO:0086090">
    <property type="term" value="F:voltage-gated potassium channel activity involved in SA node cell action potential repolarization"/>
    <property type="evidence" value="ECO:0000266"/>
    <property type="project" value="RGD"/>
</dbReference>
<dbReference type="GO" id="GO:0001508">
    <property type="term" value="P:action potential"/>
    <property type="evidence" value="ECO:0000318"/>
    <property type="project" value="GO_Central"/>
</dbReference>
<dbReference type="GO" id="GO:0086014">
    <property type="term" value="P:atrial cardiac muscle cell action potential"/>
    <property type="evidence" value="ECO:0000266"/>
    <property type="project" value="RGD"/>
</dbReference>
<dbReference type="GO" id="GO:0060081">
    <property type="term" value="P:membrane hyperpolarization"/>
    <property type="evidence" value="ECO:0000266"/>
    <property type="project" value="RGD"/>
</dbReference>
<dbReference type="GO" id="GO:0098914">
    <property type="term" value="P:membrane repolarization during atrial cardiac muscle cell action potential"/>
    <property type="evidence" value="ECO:0000266"/>
    <property type="project" value="RGD"/>
</dbReference>
<dbReference type="GO" id="GO:0086050">
    <property type="term" value="P:membrane repolarization during bundle of His cell action potential"/>
    <property type="evidence" value="ECO:0000266"/>
    <property type="project" value="RGD"/>
</dbReference>
<dbReference type="GO" id="GO:0086052">
    <property type="term" value="P:membrane repolarization during SA node cell action potential"/>
    <property type="evidence" value="ECO:0000266"/>
    <property type="project" value="RGD"/>
</dbReference>
<dbReference type="GO" id="GO:0051481">
    <property type="term" value="P:negative regulation of cytosolic calcium ion concentration"/>
    <property type="evidence" value="ECO:0000315"/>
    <property type="project" value="RGD"/>
</dbReference>
<dbReference type="GO" id="GO:0007219">
    <property type="term" value="P:Notch signaling pathway"/>
    <property type="evidence" value="ECO:0000266"/>
    <property type="project" value="RGD"/>
</dbReference>
<dbReference type="GO" id="GO:1900087">
    <property type="term" value="P:positive regulation of G1/S transition of mitotic cell cycle"/>
    <property type="evidence" value="ECO:0000314"/>
    <property type="project" value="RGD"/>
</dbReference>
<dbReference type="GO" id="GO:2000288">
    <property type="term" value="P:positive regulation of myoblast proliferation"/>
    <property type="evidence" value="ECO:0000314"/>
    <property type="project" value="RGD"/>
</dbReference>
<dbReference type="GO" id="GO:0097623">
    <property type="term" value="P:potassium ion export across plasma membrane"/>
    <property type="evidence" value="ECO:0000315"/>
    <property type="project" value="RGD"/>
</dbReference>
<dbReference type="GO" id="GO:0055075">
    <property type="term" value="P:potassium ion homeostasis"/>
    <property type="evidence" value="ECO:0000315"/>
    <property type="project" value="RGD"/>
</dbReference>
<dbReference type="GO" id="GO:0071805">
    <property type="term" value="P:potassium ion transmembrane transport"/>
    <property type="evidence" value="ECO:0000314"/>
    <property type="project" value="UniProtKB"/>
</dbReference>
<dbReference type="GO" id="GO:0006813">
    <property type="term" value="P:potassium ion transport"/>
    <property type="evidence" value="ECO:0000266"/>
    <property type="project" value="RGD"/>
</dbReference>
<dbReference type="GO" id="GO:0051259">
    <property type="term" value="P:protein complex oligomerization"/>
    <property type="evidence" value="ECO:0000315"/>
    <property type="project" value="RGD"/>
</dbReference>
<dbReference type="GO" id="GO:0051260">
    <property type="term" value="P:protein homooligomerization"/>
    <property type="evidence" value="ECO:0007669"/>
    <property type="project" value="InterPro"/>
</dbReference>
<dbReference type="GO" id="GO:0060372">
    <property type="term" value="P:regulation of atrial cardiac muscle cell membrane repolarization"/>
    <property type="evidence" value="ECO:0000266"/>
    <property type="project" value="RGD"/>
</dbReference>
<dbReference type="GO" id="GO:0086091">
    <property type="term" value="P:regulation of heart rate by cardiac conduction"/>
    <property type="evidence" value="ECO:0000266"/>
    <property type="project" value="RGD"/>
</dbReference>
<dbReference type="GO" id="GO:0042391">
    <property type="term" value="P:regulation of membrane potential"/>
    <property type="evidence" value="ECO:0000315"/>
    <property type="project" value="RGD"/>
</dbReference>
<dbReference type="GO" id="GO:0043266">
    <property type="term" value="P:regulation of potassium ion transport"/>
    <property type="evidence" value="ECO:0000266"/>
    <property type="project" value="RGD"/>
</dbReference>
<dbReference type="GO" id="GO:0019229">
    <property type="term" value="P:regulation of vasoconstriction"/>
    <property type="evidence" value="ECO:0000266"/>
    <property type="project" value="RGD"/>
</dbReference>
<dbReference type="GO" id="GO:0042542">
    <property type="term" value="P:response to hydrogen peroxide"/>
    <property type="evidence" value="ECO:0000270"/>
    <property type="project" value="RGD"/>
</dbReference>
<dbReference type="GO" id="GO:0055093">
    <property type="term" value="P:response to hyperoxia"/>
    <property type="evidence" value="ECO:0000270"/>
    <property type="project" value="RGD"/>
</dbReference>
<dbReference type="GO" id="GO:0001666">
    <property type="term" value="P:response to hypoxia"/>
    <property type="evidence" value="ECO:0000270"/>
    <property type="project" value="RGD"/>
</dbReference>
<dbReference type="GO" id="GO:0009612">
    <property type="term" value="P:response to mechanical stimulus"/>
    <property type="evidence" value="ECO:0000270"/>
    <property type="project" value="RGD"/>
</dbReference>
<dbReference type="FunFam" id="1.10.287.70:FF:000002">
    <property type="entry name" value="Potassium voltage-gated channel subfamily a member"/>
    <property type="match status" value="1"/>
</dbReference>
<dbReference type="FunFam" id="3.30.710.10:FF:000012">
    <property type="entry name" value="Potassium voltage-gated channel subfamily A member 10"/>
    <property type="match status" value="1"/>
</dbReference>
<dbReference type="FunFam" id="1.20.120.350:FF:000025">
    <property type="entry name" value="Potassium voltage-gated channel subfamily A member 2"/>
    <property type="match status" value="1"/>
</dbReference>
<dbReference type="Gene3D" id="1.10.287.70">
    <property type="match status" value="1"/>
</dbReference>
<dbReference type="Gene3D" id="3.30.710.10">
    <property type="entry name" value="Potassium Channel Kv1.1, Chain A"/>
    <property type="match status" value="1"/>
</dbReference>
<dbReference type="Gene3D" id="1.20.120.350">
    <property type="entry name" value="Voltage-gated potassium channels. Chain C"/>
    <property type="match status" value="1"/>
</dbReference>
<dbReference type="InterPro" id="IPR000210">
    <property type="entry name" value="BTB/POZ_dom"/>
</dbReference>
<dbReference type="InterPro" id="IPR005821">
    <property type="entry name" value="Ion_trans_dom"/>
</dbReference>
<dbReference type="InterPro" id="IPR003968">
    <property type="entry name" value="K_chnl_volt-dep_Kv"/>
</dbReference>
<dbReference type="InterPro" id="IPR003972">
    <property type="entry name" value="K_chnl_volt-dep_Kv1"/>
</dbReference>
<dbReference type="InterPro" id="IPR004052">
    <property type="entry name" value="K_chnl_volt-dep_Kv1.5"/>
</dbReference>
<dbReference type="InterPro" id="IPR011333">
    <property type="entry name" value="SKP1/BTB/POZ_sf"/>
</dbReference>
<dbReference type="InterPro" id="IPR003131">
    <property type="entry name" value="T1-type_BTB"/>
</dbReference>
<dbReference type="InterPro" id="IPR028325">
    <property type="entry name" value="VG_K_chnl"/>
</dbReference>
<dbReference type="InterPro" id="IPR027359">
    <property type="entry name" value="Volt_channel_dom_sf"/>
</dbReference>
<dbReference type="PANTHER" id="PTHR11537:SF250">
    <property type="entry name" value="POTASSIUM VOLTAGE-GATED CHANNEL SUBFAMILY A MEMBER 5"/>
    <property type="match status" value="1"/>
</dbReference>
<dbReference type="PANTHER" id="PTHR11537">
    <property type="entry name" value="VOLTAGE-GATED POTASSIUM CHANNEL"/>
    <property type="match status" value="1"/>
</dbReference>
<dbReference type="Pfam" id="PF02214">
    <property type="entry name" value="BTB_2"/>
    <property type="match status" value="1"/>
</dbReference>
<dbReference type="Pfam" id="PF00520">
    <property type="entry name" value="Ion_trans"/>
    <property type="match status" value="1"/>
</dbReference>
<dbReference type="PRINTS" id="PR00169">
    <property type="entry name" value="KCHANNEL"/>
</dbReference>
<dbReference type="PRINTS" id="PR01512">
    <property type="entry name" value="KV15CHANNEL"/>
</dbReference>
<dbReference type="PRINTS" id="PR01491">
    <property type="entry name" value="KVCHANNEL"/>
</dbReference>
<dbReference type="PRINTS" id="PR01496">
    <property type="entry name" value="SHAKERCHANEL"/>
</dbReference>
<dbReference type="SMART" id="SM00225">
    <property type="entry name" value="BTB"/>
    <property type="match status" value="1"/>
</dbReference>
<dbReference type="SUPFAM" id="SSF54695">
    <property type="entry name" value="POZ domain"/>
    <property type="match status" value="1"/>
</dbReference>
<dbReference type="SUPFAM" id="SSF81324">
    <property type="entry name" value="Voltage-gated potassium channels"/>
    <property type="match status" value="1"/>
</dbReference>
<name>KCNA5_RAT</name>
<proteinExistence type="evidence at protein level"/>
<reference key="1">
    <citation type="journal article" date="1990" name="Neuron">
        <title>Cloning and expression of cDNA and genomic clones encoding three delayed rectifier potassium channels in rat brain.</title>
        <authorList>
            <person name="Swanson R."/>
            <person name="Marshall J."/>
            <person name="Smith J."/>
            <person name="Williams J."/>
            <person name="Boyle M.B."/>
            <person name="Folander K."/>
            <person name="Luneau C.J."/>
            <person name="Antanavage J."/>
            <person name="Oliva C."/>
            <person name="Buhrow S.A."/>
            <person name="Bennett C."/>
            <person name="Stein R.B."/>
            <person name="Kaczmarek L.M."/>
        </authorList>
    </citation>
    <scope>NUCLEOTIDE SEQUENCE [GENOMIC DNA]</scope>
    <scope>FUNCTION</scope>
    <scope>SUBCELLULAR LOCATION</scope>
    <scope>TRANSPORTER ACTIVITY</scope>
    <source>
        <tissue>Brain</tissue>
    </source>
</reference>
<reference key="2">
    <citation type="journal article" date="1991" name="Proc. Natl. Acad. Sci. U.S.A.">
        <title>Cloning and tissue-specific expression of five voltage-gated potassium channel cDNAs expressed in rat heart.</title>
        <authorList>
            <person name="Roberds S.L."/>
            <person name="Tamkun M.M."/>
        </authorList>
    </citation>
    <scope>NUCLEOTIDE SEQUENCE [GENOMIC DNA]</scope>
    <scope>TISSUE SPECIFICITY</scope>
    <source>
        <strain>Sprague-Dawley</strain>
        <tissue>Heart</tissue>
    </source>
</reference>
<reference key="3">
    <citation type="journal article" date="1993" name="J. Biol. Chem.">
        <title>The transcription of a mammalian voltage-gated potassium channel is regulated by cAMP in a cell-specific manner.</title>
        <authorList>
            <person name="Mori Y."/>
            <person name="Matsubara H."/>
            <person name="Folco E."/>
            <person name="Siegel A."/>
            <person name="Koren G."/>
        </authorList>
    </citation>
    <scope>NUCLEOTIDE SEQUENCE [GENOMIC DNA] OF 1-15</scope>
</reference>
<reference key="4">
    <citation type="journal article" date="2001" name="Am. J. Physiol.">
        <title>SAP97 interacts with Kv1.5 in heterologous expression systems.</title>
        <authorList>
            <person name="Murata M."/>
            <person name="Buckett P.D."/>
            <person name="Zhou J."/>
            <person name="Brunner M."/>
            <person name="Folco E."/>
            <person name="Koren G."/>
        </authorList>
    </citation>
    <scope>INTERACTION WITH DLG1</scope>
    <scope>MUTAGENESIS OF 600-THR--LEU-602</scope>
</reference>
<reference key="5">
    <citation type="journal article" date="2004" name="Am. J. Physiol.">
        <title>Caveolin-3 and SAP97 form a scaffolding protein complex that regulates the voltage-gated potassium channel Kv1.5.</title>
        <authorList>
            <person name="Folco E.J."/>
            <person name="Liu G.-X."/>
            <person name="Koren G."/>
        </authorList>
    </citation>
    <scope>INTERACTION WITH DLG1 AND CAV3</scope>
    <scope>FUNCTION IN CELL EXCITATION</scope>
</reference>
<reference key="6">
    <citation type="journal article" date="2005" name="Circ. Res.">
        <title>Heteromultimeric Kv1 channels contribute to myogenic control of arterial diameter.</title>
        <authorList>
            <person name="Plane F."/>
            <person name="Johnson R."/>
            <person name="Kerr P."/>
            <person name="Wiehler W."/>
            <person name="Thorneloe K."/>
            <person name="Ishii K."/>
            <person name="Chen T."/>
            <person name="Cole W."/>
        </authorList>
    </citation>
    <scope>FUNCTION</scope>
    <scope>SUBCELLULAR LOCATION</scope>
    <scope>TRANSPORTER ACTIVITY</scope>
</reference>
<comment type="function">
    <text evidence="1 3 7 8 10">Voltage-gated potassium channel that mediates transmembrane potassium transport in excitable membranes. Forms tetrameric potassium-selective channels through which potassium ions pass in accordance with their electrochemical gradient. The channel alternates between opened and closed conformations in response to the voltage difference across the membrane (PubMed:15618540, PubMed:2361015). Can form functional homotetrameric channels and heterotetrameric channels that contain variable proportions of KCNA1, KCNA2, KCNA4, KCNA5, and possibly other family members as well; channel properties depend on the type of alpha subunits that are part of the channel (PubMed:15618540). Channel properties are modulated by cytoplasmic beta subunits that regulate the subcellular location of the alpha subunits and promote rapid inactivation (PubMed:15618540). Homotetrameric channels display rapid activation and slow inactivation. Required for normal electrical conduction including formation of the infranodal ventricular conduction system and normal action potential configuration, as a result of its interaction with XIRP2 (By similarity). May play a role in regulating the secretion of insulin in normal pancreatic islets (By similarity).</text>
</comment>
<comment type="catalytic activity">
    <reaction evidence="8 10">
        <text>K(+)(in) = K(+)(out)</text>
        <dbReference type="Rhea" id="RHEA:29463"/>
        <dbReference type="ChEBI" id="CHEBI:29103"/>
    </reaction>
</comment>
<comment type="subunit">
    <text evidence="1 3 6 7">Homotetramer and heterotetramer of potassium channel proteins. Interacts with DLG1, which enhances channel currents (PubMed:11709425). Forms a ternary complex with DLG1 and CAV3 (PubMed:15277200). Interacts with KCNAB1 (By similarity). Interacts with UBE2I (By similarity). Interacts with XIRP2; the interaction is required for normal action potential configuration in the heart (By similarity).</text>
</comment>
<comment type="subcellular location">
    <subcellularLocation>
        <location evidence="8 10">Cell membrane</location>
        <topology evidence="11">Multi-pass membrane protein</topology>
    </subcellularLocation>
</comment>
<comment type="tissue specificity">
    <text evidence="9">Expressed equally in atrium, ventricle, aorta and skeletal muscle. Weaker expression in brain.</text>
</comment>
<comment type="induction">
    <text>Expression regulated by cAMP in a tissue-specific manner. In primary cardiac cells, levels increase by 6-fold, and in GH3 cells, levels decrease 5-6-fold.</text>
</comment>
<comment type="domain">
    <text>The N-terminus may be important in determining the rate of inactivation of the channel while the C-terminal PDZ-binding motif may play a role in modulation of channel activity and/or targeting of the channel to specific subcellular compartments.</text>
</comment>
<comment type="domain">
    <text evidence="2">The transmembrane segment S4 functions as a voltage-sensor and is characterized by a series of positively charged amino acids at every third position. Channel opening and closing is effected by a conformation change that affects the position and orientation of the voltage-sensor paddle formed by S3 and S4 within the membrane. A transmembrane electric field that is positive inside would push the positively charged S4 segment outwards, thereby opening the pore, while a field that is negative inside would pull the S4 segment inwards and close the pore. Changes in the position and orientation of S4 are then transmitted to the activation gate formed by the inner helix bundle via the S4-S5 linker region.</text>
</comment>
<comment type="PTM">
    <text evidence="1">Glycosylated.</text>
</comment>
<comment type="PTM">
    <text evidence="1">Sumoylated on Lys-212, and Lys-525, preferentially with SUMO3. Sumoylation regulates the voltage sensitivity of the channel (By similarity).</text>
</comment>
<comment type="similarity">
    <text evidence="11">Belongs to the potassium channel family. A (Shaker) (TC 1.A.1.2) subfamily. Kv1.5/KCNA5 sub-subfamily.</text>
</comment>
<keyword id="KW-1003">Cell membrane</keyword>
<keyword id="KW-0407">Ion channel</keyword>
<keyword id="KW-0406">Ion transport</keyword>
<keyword id="KW-1017">Isopeptide bond</keyword>
<keyword id="KW-0449">Lipoprotein</keyword>
<keyword id="KW-0472">Membrane</keyword>
<keyword id="KW-0564">Palmitate</keyword>
<keyword id="KW-0597">Phosphoprotein</keyword>
<keyword id="KW-0630">Potassium</keyword>
<keyword id="KW-0631">Potassium channel</keyword>
<keyword id="KW-0633">Potassium transport</keyword>
<keyword id="KW-1185">Reference proteome</keyword>
<keyword id="KW-0812">Transmembrane</keyword>
<keyword id="KW-1133">Transmembrane helix</keyword>
<keyword id="KW-0813">Transport</keyword>
<keyword id="KW-0832">Ubl conjugation</keyword>
<keyword id="KW-0851">Voltage-gated channel</keyword>
<evidence type="ECO:0000250" key="1">
    <source>
        <dbReference type="UniProtKB" id="P22460"/>
    </source>
</evidence>
<evidence type="ECO:0000250" key="2">
    <source>
        <dbReference type="UniProtKB" id="P63142"/>
    </source>
</evidence>
<evidence type="ECO:0000250" key="3">
    <source>
        <dbReference type="UniProtKB" id="Q61762"/>
    </source>
</evidence>
<evidence type="ECO:0000255" key="4"/>
<evidence type="ECO:0000256" key="5">
    <source>
        <dbReference type="SAM" id="MobiDB-lite"/>
    </source>
</evidence>
<evidence type="ECO:0000269" key="6">
    <source>
    </source>
</evidence>
<evidence type="ECO:0000269" key="7">
    <source>
    </source>
</evidence>
<evidence type="ECO:0000269" key="8">
    <source>
    </source>
</evidence>
<evidence type="ECO:0000269" key="9">
    <source>
    </source>
</evidence>
<evidence type="ECO:0000269" key="10">
    <source>
    </source>
</evidence>
<evidence type="ECO:0000305" key="11"/>